<sequence>MNIKSLLLGSAAALVAASGAQAADAIVAPEPEAVEYVRVCDAYGAGYFYIPGTETCLRVHGYVRYDVKGGDDVYTGSDRKGWDKGARFALMFNTNSETELGTLGTYTQLRFNYTSNNSRHDGQYGDFSDDRDVADGGVSTGTDLQFAYITLGGFKVGIDESEFHTFTGYLGDVINDDVVAAGSYRTGKIAYTFTGGNGFSAVIALEQGGEDVDNDYTIDGYMPHVVGGLKYAGGWGSIAGAVAYDPVIEEWATKVRGDVNITDRFSVWLQGAYSSAATPNQNYGQWGGDWAVWGGAKFIATEKATFNLQAAHDDWGKTAVTANVAYQLVPGFTITPEVSYTKFGGEWKDTVAEDNAWGGIVRFQRSF</sequence>
<proteinExistence type="inferred from homology"/>
<feature type="signal peptide" evidence="3">
    <location>
        <begin position="1"/>
        <end position="22"/>
    </location>
</feature>
<feature type="chain" id="PRO_0000354011" description="Porin Omp2a">
    <location>
        <begin position="23"/>
        <end position="367"/>
    </location>
</feature>
<reference key="1">
    <citation type="journal article" date="1996" name="Int. J. Syst. Bacteriol.">
        <title>Species-specific sequences at the omp2 locus of Brucella type strains.</title>
        <authorList>
            <person name="Ficht T.A."/>
            <person name="Husseinen H.S."/>
            <person name="Derr J."/>
            <person name="Bearden S.W."/>
        </authorList>
    </citation>
    <scope>NUCLEOTIDE SEQUENCE [GENOMIC DNA]</scope>
</reference>
<gene>
    <name type="primary">omp2a</name>
</gene>
<keyword id="KW-0998">Cell outer membrane</keyword>
<keyword id="KW-0406">Ion transport</keyword>
<keyword id="KW-0472">Membrane</keyword>
<keyword id="KW-0626">Porin</keyword>
<keyword id="KW-0732">Signal</keyword>
<keyword id="KW-0812">Transmembrane</keyword>
<keyword id="KW-1134">Transmembrane beta strand</keyword>
<keyword id="KW-0813">Transport</keyword>
<protein>
    <recommendedName>
        <fullName>Porin Omp2a</fullName>
    </recommendedName>
</protein>
<organism>
    <name type="scientific">Brucella canis</name>
    <dbReference type="NCBI Taxonomy" id="36855"/>
    <lineage>
        <taxon>Bacteria</taxon>
        <taxon>Pseudomonadati</taxon>
        <taxon>Pseudomonadota</taxon>
        <taxon>Alphaproteobacteria</taxon>
        <taxon>Hyphomicrobiales</taxon>
        <taxon>Brucellaceae</taxon>
        <taxon>Brucella/Ochrobactrum group</taxon>
        <taxon>Brucella</taxon>
    </lineage>
</organism>
<evidence type="ECO:0000250" key="1"/>
<evidence type="ECO:0000250" key="2">
    <source>
        <dbReference type="UniProtKB" id="B2SAB9"/>
    </source>
</evidence>
<evidence type="ECO:0000255" key="3"/>
<evidence type="ECO:0000305" key="4"/>
<comment type="function">
    <text evidence="2">Forms passive diffusion pores that allow small molecular weight hydrophilic materials across the outer membrane.</text>
</comment>
<comment type="subunit">
    <text evidence="2">Monomer.</text>
</comment>
<comment type="subcellular location">
    <subcellularLocation>
        <location evidence="1">Cell outer membrane</location>
        <topology evidence="2">Multi-pass membrane protein</topology>
    </subcellularLocation>
</comment>
<comment type="domain">
    <text evidence="2">Consists of 16-stranded beta-barrel sheets, with large surface-exposed loops, that form a transmembrane pore at the center of each barrel. The pore is partially ocluded by a peptide loop that folds into the pore lumen.</text>
</comment>
<comment type="miscellaneous">
    <text evidence="2">The pore formed by Omp2a is larger than the one formed by Omp2b. Omp2b pores have optimal permeability to allow growth and protection against harmful compounds. The larger pore formed by Omp2a may be advantageous for intracellular growth, when the bacterium is competing with the host cell for nutrients whose concentration is particularly low within the phagosome.</text>
</comment>
<comment type="similarity">
    <text evidence="4">Belongs to the alphaproteobacteria porin family.</text>
</comment>
<name>OMP2A_BRUCA</name>
<dbReference type="EMBL" id="U26439">
    <property type="protein sequence ID" value="AAA67786.1"/>
    <property type="molecule type" value="Genomic_DNA"/>
</dbReference>
<dbReference type="RefSeq" id="WP_006132438.1">
    <property type="nucleotide sequence ID" value="NZ_UFQW01000008.1"/>
</dbReference>
<dbReference type="SMR" id="Q45079"/>
<dbReference type="KEGG" id="bcar:DK60_712"/>
<dbReference type="KEGG" id="bcas:DA85_03020"/>
<dbReference type="OMA" id="NMRFTLR"/>
<dbReference type="GO" id="GO:0009279">
    <property type="term" value="C:cell outer membrane"/>
    <property type="evidence" value="ECO:0007669"/>
    <property type="project" value="UniProtKB-SubCell"/>
</dbReference>
<dbReference type="GO" id="GO:0046930">
    <property type="term" value="C:pore complex"/>
    <property type="evidence" value="ECO:0007669"/>
    <property type="project" value="UniProtKB-KW"/>
</dbReference>
<dbReference type="GO" id="GO:0015288">
    <property type="term" value="F:porin activity"/>
    <property type="evidence" value="ECO:0007669"/>
    <property type="project" value="UniProtKB-KW"/>
</dbReference>
<dbReference type="GO" id="GO:0006811">
    <property type="term" value="P:monoatomic ion transport"/>
    <property type="evidence" value="ECO:0007669"/>
    <property type="project" value="UniProtKB-KW"/>
</dbReference>
<dbReference type="InterPro" id="IPR003684">
    <property type="entry name" value="Porin_alphabac"/>
</dbReference>
<dbReference type="Pfam" id="PF02530">
    <property type="entry name" value="Porin_2"/>
    <property type="match status" value="1"/>
</dbReference>
<dbReference type="SUPFAM" id="SSF56935">
    <property type="entry name" value="Porins"/>
    <property type="match status" value="1"/>
</dbReference>
<accession>Q45079</accession>